<sequence>MIALIQRVTRASVTVEDEVTGEIGPGLLVLLGVEKDDDEQKANRLCERVLGYRIFSDADGKMNLNVQQAGGSVLVVSQFTLAADTDRGMRPGFSKGAAPDRAEALYDYFVERCRQQEMNTQTGRFAADMQVSLVNDGPVTFWLQV</sequence>
<protein>
    <recommendedName>
        <fullName evidence="1">D-aminoacyl-tRNA deacylase</fullName>
        <shortName evidence="1">DTD</shortName>
        <ecNumber evidence="1">3.1.1.96</ecNumber>
    </recommendedName>
    <alternativeName>
        <fullName evidence="1">Gly-tRNA(Ala) deacylase</fullName>
    </alternativeName>
</protein>
<feature type="chain" id="PRO_1000060908" description="D-aminoacyl-tRNA deacylase">
    <location>
        <begin position="1"/>
        <end position="145"/>
    </location>
</feature>
<feature type="short sequence motif" description="Gly-cisPro motif, important for rejection of L-amino acids" evidence="1">
    <location>
        <begin position="137"/>
        <end position="138"/>
    </location>
</feature>
<proteinExistence type="inferred from homology"/>
<keyword id="KW-0963">Cytoplasm</keyword>
<keyword id="KW-0378">Hydrolase</keyword>
<keyword id="KW-0694">RNA-binding</keyword>
<keyword id="KW-0820">tRNA-binding</keyword>
<evidence type="ECO:0000255" key="1">
    <source>
        <dbReference type="HAMAP-Rule" id="MF_00518"/>
    </source>
</evidence>
<gene>
    <name evidence="1" type="primary">dtd</name>
    <name type="ordered locus">Ent638_4091</name>
</gene>
<accession>A4WGB6</accession>
<dbReference type="EC" id="3.1.1.96" evidence="1"/>
<dbReference type="EMBL" id="CP000653">
    <property type="protein sequence ID" value="ABP62746.1"/>
    <property type="molecule type" value="Genomic_DNA"/>
</dbReference>
<dbReference type="RefSeq" id="WP_015961050.1">
    <property type="nucleotide sequence ID" value="NC_009436.1"/>
</dbReference>
<dbReference type="SMR" id="A4WGB6"/>
<dbReference type="STRING" id="399742.Ent638_4091"/>
<dbReference type="KEGG" id="ent:Ent638_4091"/>
<dbReference type="eggNOG" id="COG1490">
    <property type="taxonomic scope" value="Bacteria"/>
</dbReference>
<dbReference type="HOGENOM" id="CLU_076901_1_0_6"/>
<dbReference type="OrthoDB" id="9801395at2"/>
<dbReference type="Proteomes" id="UP000000230">
    <property type="component" value="Chromosome"/>
</dbReference>
<dbReference type="GO" id="GO:0005737">
    <property type="term" value="C:cytoplasm"/>
    <property type="evidence" value="ECO:0007669"/>
    <property type="project" value="UniProtKB-SubCell"/>
</dbReference>
<dbReference type="GO" id="GO:0051500">
    <property type="term" value="F:D-tyrosyl-tRNA(Tyr) deacylase activity"/>
    <property type="evidence" value="ECO:0007669"/>
    <property type="project" value="TreeGrafter"/>
</dbReference>
<dbReference type="GO" id="GO:0106026">
    <property type="term" value="F:Gly-tRNA(Ala) deacylase activity"/>
    <property type="evidence" value="ECO:0007669"/>
    <property type="project" value="UniProtKB-UniRule"/>
</dbReference>
<dbReference type="GO" id="GO:0043908">
    <property type="term" value="F:Ser(Gly)-tRNA(Ala) hydrolase activity"/>
    <property type="evidence" value="ECO:0007669"/>
    <property type="project" value="UniProtKB-UniRule"/>
</dbReference>
<dbReference type="GO" id="GO:0000049">
    <property type="term" value="F:tRNA binding"/>
    <property type="evidence" value="ECO:0007669"/>
    <property type="project" value="UniProtKB-UniRule"/>
</dbReference>
<dbReference type="GO" id="GO:0019478">
    <property type="term" value="P:D-amino acid catabolic process"/>
    <property type="evidence" value="ECO:0007669"/>
    <property type="project" value="UniProtKB-UniRule"/>
</dbReference>
<dbReference type="CDD" id="cd00563">
    <property type="entry name" value="Dtyr_deacylase"/>
    <property type="match status" value="1"/>
</dbReference>
<dbReference type="FunFam" id="3.50.80.10:FF:000001">
    <property type="entry name" value="D-aminoacyl-tRNA deacylase"/>
    <property type="match status" value="1"/>
</dbReference>
<dbReference type="Gene3D" id="3.50.80.10">
    <property type="entry name" value="D-tyrosyl-tRNA(Tyr) deacylase"/>
    <property type="match status" value="1"/>
</dbReference>
<dbReference type="HAMAP" id="MF_00518">
    <property type="entry name" value="Deacylase_Dtd"/>
    <property type="match status" value="1"/>
</dbReference>
<dbReference type="InterPro" id="IPR003732">
    <property type="entry name" value="Daa-tRNA_deacyls_DTD"/>
</dbReference>
<dbReference type="InterPro" id="IPR023509">
    <property type="entry name" value="DTD-like_sf"/>
</dbReference>
<dbReference type="NCBIfam" id="TIGR00256">
    <property type="entry name" value="D-aminoacyl-tRNA deacylase"/>
    <property type="match status" value="1"/>
</dbReference>
<dbReference type="PANTHER" id="PTHR10472:SF5">
    <property type="entry name" value="D-AMINOACYL-TRNA DEACYLASE 1"/>
    <property type="match status" value="1"/>
</dbReference>
<dbReference type="PANTHER" id="PTHR10472">
    <property type="entry name" value="D-TYROSYL-TRNA TYR DEACYLASE"/>
    <property type="match status" value="1"/>
</dbReference>
<dbReference type="Pfam" id="PF02580">
    <property type="entry name" value="Tyr_Deacylase"/>
    <property type="match status" value="1"/>
</dbReference>
<dbReference type="SUPFAM" id="SSF69500">
    <property type="entry name" value="DTD-like"/>
    <property type="match status" value="1"/>
</dbReference>
<name>DTD_ENT38</name>
<organism>
    <name type="scientific">Enterobacter sp. (strain 638)</name>
    <dbReference type="NCBI Taxonomy" id="399742"/>
    <lineage>
        <taxon>Bacteria</taxon>
        <taxon>Pseudomonadati</taxon>
        <taxon>Pseudomonadota</taxon>
        <taxon>Gammaproteobacteria</taxon>
        <taxon>Enterobacterales</taxon>
        <taxon>Enterobacteriaceae</taxon>
        <taxon>Enterobacter</taxon>
    </lineage>
</organism>
<comment type="function">
    <text evidence="1">An aminoacyl-tRNA editing enzyme that deacylates mischarged D-aminoacyl-tRNAs. Also deacylates mischarged glycyl-tRNA(Ala), protecting cells against glycine mischarging by AlaRS. Acts via tRNA-based rather than protein-based catalysis; rejects L-amino acids rather than detecting D-amino acids in the active site. By recycling D-aminoacyl-tRNA to D-amino acids and free tRNA molecules, this enzyme counteracts the toxicity associated with the formation of D-aminoacyl-tRNA entities in vivo and helps enforce protein L-homochirality.</text>
</comment>
<comment type="catalytic activity">
    <reaction evidence="1">
        <text>glycyl-tRNA(Ala) + H2O = tRNA(Ala) + glycine + H(+)</text>
        <dbReference type="Rhea" id="RHEA:53744"/>
        <dbReference type="Rhea" id="RHEA-COMP:9657"/>
        <dbReference type="Rhea" id="RHEA-COMP:13640"/>
        <dbReference type="ChEBI" id="CHEBI:15377"/>
        <dbReference type="ChEBI" id="CHEBI:15378"/>
        <dbReference type="ChEBI" id="CHEBI:57305"/>
        <dbReference type="ChEBI" id="CHEBI:78442"/>
        <dbReference type="ChEBI" id="CHEBI:78522"/>
        <dbReference type="EC" id="3.1.1.96"/>
    </reaction>
</comment>
<comment type="catalytic activity">
    <reaction evidence="1">
        <text>a D-aminoacyl-tRNA + H2O = a tRNA + a D-alpha-amino acid + H(+)</text>
        <dbReference type="Rhea" id="RHEA:13953"/>
        <dbReference type="Rhea" id="RHEA-COMP:10123"/>
        <dbReference type="Rhea" id="RHEA-COMP:10124"/>
        <dbReference type="ChEBI" id="CHEBI:15377"/>
        <dbReference type="ChEBI" id="CHEBI:15378"/>
        <dbReference type="ChEBI" id="CHEBI:59871"/>
        <dbReference type="ChEBI" id="CHEBI:78442"/>
        <dbReference type="ChEBI" id="CHEBI:79333"/>
        <dbReference type="EC" id="3.1.1.96"/>
    </reaction>
</comment>
<comment type="subunit">
    <text evidence="1">Homodimer.</text>
</comment>
<comment type="subcellular location">
    <subcellularLocation>
        <location evidence="1">Cytoplasm</location>
    </subcellularLocation>
</comment>
<comment type="domain">
    <text evidence="1">A Gly-cisPro motif from one monomer fits into the active site of the other monomer to allow specific chiral rejection of L-amino acids.</text>
</comment>
<comment type="similarity">
    <text evidence="1">Belongs to the DTD family.</text>
</comment>
<reference key="1">
    <citation type="journal article" date="2010" name="PLoS Genet.">
        <title>Genome sequence of the plant growth promoting endophytic bacterium Enterobacter sp. 638.</title>
        <authorList>
            <person name="Taghavi S."/>
            <person name="van der Lelie D."/>
            <person name="Hoffman A."/>
            <person name="Zhang Y.B."/>
            <person name="Walla M.D."/>
            <person name="Vangronsveld J."/>
            <person name="Newman L."/>
            <person name="Monchy S."/>
        </authorList>
    </citation>
    <scope>NUCLEOTIDE SEQUENCE [LARGE SCALE GENOMIC DNA]</scope>
    <source>
        <strain>638</strain>
    </source>
</reference>